<comment type="function">
    <text evidence="1">Converts heme B (protoheme IX) to heme O by substitution of the vinyl group on carbon 2 of heme B porphyrin ring with a hydroxyethyl farnesyl side group.</text>
</comment>
<comment type="catalytic activity">
    <reaction evidence="1">
        <text>heme b + (2E,6E)-farnesyl diphosphate + H2O = Fe(II)-heme o + diphosphate</text>
        <dbReference type="Rhea" id="RHEA:28070"/>
        <dbReference type="ChEBI" id="CHEBI:15377"/>
        <dbReference type="ChEBI" id="CHEBI:33019"/>
        <dbReference type="ChEBI" id="CHEBI:60344"/>
        <dbReference type="ChEBI" id="CHEBI:60530"/>
        <dbReference type="ChEBI" id="CHEBI:175763"/>
        <dbReference type="EC" id="2.5.1.141"/>
    </reaction>
</comment>
<comment type="pathway">
    <text evidence="1">Porphyrin-containing compound metabolism; heme O biosynthesis; heme O from protoheme: step 1/1.</text>
</comment>
<comment type="subcellular location">
    <subcellularLocation>
        <location evidence="1">Cell membrane</location>
        <topology evidence="1">Multi-pass membrane protein</topology>
    </subcellularLocation>
</comment>
<comment type="miscellaneous">
    <text evidence="1">Carbon 2 of the heme B porphyrin ring is defined according to the Fischer nomenclature.</text>
</comment>
<comment type="similarity">
    <text evidence="1">Belongs to the UbiA prenyltransferase family. Protoheme IX farnesyltransferase subfamily.</text>
</comment>
<gene>
    <name evidence="1" type="primary">ctaB</name>
    <name type="ordered locus">MAB_2758c</name>
</gene>
<feature type="chain" id="PRO_1000096922" description="Protoheme IX farnesyltransferase">
    <location>
        <begin position="1"/>
        <end position="313"/>
    </location>
</feature>
<feature type="transmembrane region" description="Helical" evidence="1">
    <location>
        <begin position="23"/>
        <end position="43"/>
    </location>
</feature>
<feature type="transmembrane region" description="Helical" evidence="1">
    <location>
        <begin position="56"/>
        <end position="76"/>
    </location>
</feature>
<feature type="transmembrane region" description="Helical" evidence="1">
    <location>
        <begin position="107"/>
        <end position="127"/>
    </location>
</feature>
<feature type="transmembrane region" description="Helical" evidence="1">
    <location>
        <begin position="128"/>
        <end position="148"/>
    </location>
</feature>
<feature type="transmembrane region" description="Helical" evidence="1">
    <location>
        <begin position="155"/>
        <end position="175"/>
    </location>
</feature>
<feature type="transmembrane region" description="Helical" evidence="1">
    <location>
        <begin position="182"/>
        <end position="202"/>
    </location>
</feature>
<feature type="transmembrane region" description="Helical" evidence="1">
    <location>
        <begin position="243"/>
        <end position="263"/>
    </location>
</feature>
<feature type="transmembrane region" description="Helical" evidence="1">
    <location>
        <begin position="291"/>
        <end position="311"/>
    </location>
</feature>
<protein>
    <recommendedName>
        <fullName evidence="1">Protoheme IX farnesyltransferase</fullName>
        <ecNumber evidence="1">2.5.1.141</ecNumber>
    </recommendedName>
    <alternativeName>
        <fullName evidence="1">Heme B farnesyltransferase</fullName>
    </alternativeName>
    <alternativeName>
        <fullName evidence="1">Heme O synthase</fullName>
    </alternativeName>
</protein>
<evidence type="ECO:0000255" key="1">
    <source>
        <dbReference type="HAMAP-Rule" id="MF_00154"/>
    </source>
</evidence>
<organism>
    <name type="scientific">Mycobacteroides abscessus (strain ATCC 19977 / DSM 44196 / CCUG 20993 / CIP 104536 / JCM 13569 / NCTC 13031 / TMC 1543 / L948)</name>
    <name type="common">Mycobacterium abscessus</name>
    <dbReference type="NCBI Taxonomy" id="561007"/>
    <lineage>
        <taxon>Bacteria</taxon>
        <taxon>Bacillati</taxon>
        <taxon>Actinomycetota</taxon>
        <taxon>Actinomycetes</taxon>
        <taxon>Mycobacteriales</taxon>
        <taxon>Mycobacteriaceae</taxon>
        <taxon>Mycobacteroides</taxon>
        <taxon>Mycobacteroides abscessus</taxon>
    </lineage>
</organism>
<accession>B1MC66</accession>
<name>COXX_MYCA9</name>
<dbReference type="EC" id="2.5.1.141" evidence="1"/>
<dbReference type="EMBL" id="CU458896">
    <property type="protein sequence ID" value="CAM62837.1"/>
    <property type="molecule type" value="Genomic_DNA"/>
</dbReference>
<dbReference type="SMR" id="B1MC66"/>
<dbReference type="KEGG" id="mab:MAB_2758c"/>
<dbReference type="UniPathway" id="UPA00834">
    <property type="reaction ID" value="UER00712"/>
</dbReference>
<dbReference type="Proteomes" id="UP000007137">
    <property type="component" value="Chromosome"/>
</dbReference>
<dbReference type="GO" id="GO:0005886">
    <property type="term" value="C:plasma membrane"/>
    <property type="evidence" value="ECO:0007669"/>
    <property type="project" value="UniProtKB-SubCell"/>
</dbReference>
<dbReference type="GO" id="GO:0008495">
    <property type="term" value="F:protoheme IX farnesyltransferase activity"/>
    <property type="evidence" value="ECO:0007669"/>
    <property type="project" value="UniProtKB-UniRule"/>
</dbReference>
<dbReference type="GO" id="GO:0048034">
    <property type="term" value="P:heme O biosynthetic process"/>
    <property type="evidence" value="ECO:0007669"/>
    <property type="project" value="UniProtKB-UniRule"/>
</dbReference>
<dbReference type="CDD" id="cd13957">
    <property type="entry name" value="PT_UbiA_Cox10"/>
    <property type="match status" value="1"/>
</dbReference>
<dbReference type="FunFam" id="1.10.357.140:FF:000001">
    <property type="entry name" value="Protoheme IX farnesyltransferase"/>
    <property type="match status" value="1"/>
</dbReference>
<dbReference type="Gene3D" id="1.10.357.140">
    <property type="entry name" value="UbiA prenyltransferase"/>
    <property type="match status" value="1"/>
</dbReference>
<dbReference type="HAMAP" id="MF_00154">
    <property type="entry name" value="CyoE_CtaB"/>
    <property type="match status" value="1"/>
</dbReference>
<dbReference type="InterPro" id="IPR006369">
    <property type="entry name" value="Protohaem_IX_farnesylTrfase"/>
</dbReference>
<dbReference type="InterPro" id="IPR000537">
    <property type="entry name" value="UbiA_prenyltransferase"/>
</dbReference>
<dbReference type="InterPro" id="IPR044878">
    <property type="entry name" value="UbiA_sf"/>
</dbReference>
<dbReference type="NCBIfam" id="TIGR01473">
    <property type="entry name" value="cyoE_ctaB"/>
    <property type="match status" value="1"/>
</dbReference>
<dbReference type="NCBIfam" id="NF003349">
    <property type="entry name" value="PRK04375.1-2"/>
    <property type="match status" value="1"/>
</dbReference>
<dbReference type="PANTHER" id="PTHR43448:SF7">
    <property type="entry name" value="4-HYDROXYBENZOATE SOLANESYLTRANSFERASE"/>
    <property type="match status" value="1"/>
</dbReference>
<dbReference type="PANTHER" id="PTHR43448">
    <property type="entry name" value="PROTOHEME IX FARNESYLTRANSFERASE, MITOCHONDRIAL"/>
    <property type="match status" value="1"/>
</dbReference>
<dbReference type="Pfam" id="PF01040">
    <property type="entry name" value="UbiA"/>
    <property type="match status" value="1"/>
</dbReference>
<reference key="1">
    <citation type="journal article" date="2009" name="PLoS ONE">
        <title>Non mycobacterial virulence genes in the genome of the emerging pathogen Mycobacterium abscessus.</title>
        <authorList>
            <person name="Ripoll F."/>
            <person name="Pasek S."/>
            <person name="Schenowitz C."/>
            <person name="Dossat C."/>
            <person name="Barbe V."/>
            <person name="Rottman M."/>
            <person name="Macheras E."/>
            <person name="Heym B."/>
            <person name="Herrmann J.L."/>
            <person name="Daffe M."/>
            <person name="Brosch R."/>
            <person name="Risler J.L."/>
            <person name="Gaillard J.L."/>
        </authorList>
    </citation>
    <scope>NUCLEOTIDE SEQUENCE [LARGE SCALE GENOMIC DNA]</scope>
    <source>
        <strain>ATCC 19977 / DSM 44196 / CCUG 20993 / CIP 104536 / JCM 13569 / NCTC 13031 / TMC 1543 / L948</strain>
    </source>
</reference>
<sequence>MRMRETQGAQGRGRNAPPFLRTILAYIALTKPRVIELLLVTTIPAMLLADRGDVNPLLILNTLLGGVMAAASANTLNCVADADIDKVMKRTARRPLAMSSVTTRNALIFGVVLGVGAFAWLWWTANLLSGLLAVATIAFYVFVYTLVLKRRTAQNVVWGGAAGCMPVMIGWSAVTNTIQWPALVMFAVIFFWTPPHTWALAMRYKEDYRAAGVPMLPVIATEEKVTKLILVYTWLTVLSTLALALAAGVIYAVVAFLAGVWFLAMAHQLYSGVRKGQPIRPLRLFLQSNNYLAVVFCALAVDSVVGWPTLFQL</sequence>
<proteinExistence type="inferred from homology"/>
<keyword id="KW-1003">Cell membrane</keyword>
<keyword id="KW-0350">Heme biosynthesis</keyword>
<keyword id="KW-0472">Membrane</keyword>
<keyword id="KW-1185">Reference proteome</keyword>
<keyword id="KW-0808">Transferase</keyword>
<keyword id="KW-0812">Transmembrane</keyword>
<keyword id="KW-1133">Transmembrane helix</keyword>